<comment type="function">
    <text evidence="1">Polymerase involved in the biosynthesis of the lipopolysaccharide (LPS) (By similarity). Catalyzes the polymerization of the O-antigen repeat units on the periplasmic face of the inner membrane, leading to the formation of the lipid-linked O-antigen molecule (By similarity).</text>
</comment>
<comment type="catalytic activity">
    <reaction evidence="1">
        <text>n lipid-linked O-antigen repeat units = a lipid-linked O antigen + (n-1) polyisoprenyl diphosphate.</text>
        <dbReference type="EC" id="2.4.99.27"/>
    </reaction>
</comment>
<comment type="pathway">
    <text evidence="1">Bacterial outer membrane biogenesis; LPS O-antigen biosynthesis.</text>
</comment>
<comment type="subcellular location">
    <subcellularLocation>
        <location evidence="1">Cell inner membrane</location>
        <topology evidence="2">Multi-pass membrane protein</topology>
    </subcellularLocation>
</comment>
<organism>
    <name type="scientific">Salmonella typhi</name>
    <dbReference type="NCBI Taxonomy" id="90370"/>
    <lineage>
        <taxon>Bacteria</taxon>
        <taxon>Pseudomonadati</taxon>
        <taxon>Pseudomonadota</taxon>
        <taxon>Gammaproteobacteria</taxon>
        <taxon>Enterobacterales</taxon>
        <taxon>Enterobacteriaceae</taxon>
        <taxon>Salmonella</taxon>
    </lineage>
</organism>
<proteinExistence type="inferred from homology"/>
<sequence>MLIISYIALCLLFIVYLYTLSVRIEGKIINVMVPYLIITVPTLYVFEGIFVYLSEVQNYTVEYLFFYTCYITYIASFVISYLYTQRKPIYNKSNTKNKPRYVFTSLLFTFLAFIIYLPVLMEFREYILSPRRIYELTRTGYGIYFYPSLMFSLVASICAFFTYKKSKLFCISIVLFNCILIFLHGNKGPIFSIFIAFILYLSYIENKKIKFMFLVKSFAVIAVIVTAFFAYTFTDGNPIENMANYSDYTRNAVLVASSNFDFMYGKLLMESEVYSRIPRAIWPDKPEDFGALYLAKVFFPDAFYRNQGAPAFGYGELYADFGLFTPVWLVISGVFKGVLAKYFSNKTQETKSAHYFIMFLFCIGISVIPVSMGWLFPEHLMIAFMVYIASSFVFSEHIRFVLLRNNK</sequence>
<feature type="chain" id="PRO_0000097300" description="O-antigen polymerase">
    <location>
        <begin position="1"/>
        <end position="407"/>
    </location>
</feature>
<feature type="transmembrane region" description="Helical" evidence="2">
    <location>
        <begin position="2"/>
        <end position="22"/>
    </location>
</feature>
<feature type="transmembrane region" description="Helical" evidence="2">
    <location>
        <begin position="31"/>
        <end position="51"/>
    </location>
</feature>
<feature type="transmembrane region" description="Helical" evidence="2">
    <location>
        <begin position="63"/>
        <end position="83"/>
    </location>
</feature>
<feature type="transmembrane region" description="Helical" evidence="2">
    <location>
        <begin position="101"/>
        <end position="121"/>
    </location>
</feature>
<feature type="transmembrane region" description="Helical" evidence="2">
    <location>
        <begin position="141"/>
        <end position="161"/>
    </location>
</feature>
<feature type="transmembrane region" description="Helical" evidence="2">
    <location>
        <begin position="168"/>
        <end position="185"/>
    </location>
</feature>
<feature type="transmembrane region" description="Helical" evidence="2">
    <location>
        <begin position="190"/>
        <end position="204"/>
    </location>
</feature>
<feature type="transmembrane region" description="Helical" evidence="2">
    <location>
        <begin position="211"/>
        <end position="231"/>
    </location>
</feature>
<feature type="transmembrane region" description="Helical" evidence="2">
    <location>
        <begin position="319"/>
        <end position="339"/>
    </location>
</feature>
<feature type="transmembrane region" description="Helical" evidence="2">
    <location>
        <begin position="356"/>
        <end position="376"/>
    </location>
</feature>
<feature type="transmembrane region" description="Helical" evidence="2">
    <location>
        <begin position="382"/>
        <end position="402"/>
    </location>
</feature>
<keyword id="KW-0997">Cell inner membrane</keyword>
<keyword id="KW-1003">Cell membrane</keyword>
<keyword id="KW-0448">Lipopolysaccharide biosynthesis</keyword>
<keyword id="KW-0472">Membrane</keyword>
<keyword id="KW-0808">Transferase</keyword>
<keyword id="KW-0812">Transmembrane</keyword>
<keyword id="KW-1133">Transmembrane helix</keyword>
<dbReference type="EC" id="2.4.99.27" evidence="1"/>
<dbReference type="EMBL" id="AL513382">
    <property type="protein sequence ID" value="CAD02021.1"/>
    <property type="molecule type" value="Genomic_DNA"/>
</dbReference>
<dbReference type="EMBL" id="AE014613">
    <property type="protein sequence ID" value="AAO68867.1"/>
    <property type="molecule type" value="Genomic_DNA"/>
</dbReference>
<dbReference type="RefSeq" id="NP_456180.1">
    <property type="nucleotide sequence ID" value="NC_003198.1"/>
</dbReference>
<dbReference type="RefSeq" id="WP_000905563.1">
    <property type="nucleotide sequence ID" value="NZ_WSUR01000011.1"/>
</dbReference>
<dbReference type="STRING" id="220341.gene:17585713"/>
<dbReference type="TCDB" id="9.B.128.3.1">
    <property type="family name" value="the o-antigen polymerase, wzye (wzye) family"/>
</dbReference>
<dbReference type="KEGG" id="stt:t1212"/>
<dbReference type="KEGG" id="sty:STY1779"/>
<dbReference type="PATRIC" id="fig|220341.7.peg.1791"/>
<dbReference type="eggNOG" id="ENOG50327N8">
    <property type="taxonomic scope" value="Bacteria"/>
</dbReference>
<dbReference type="HOGENOM" id="CLU_057683_0_0_6"/>
<dbReference type="OMA" id="AYIFISS"/>
<dbReference type="OrthoDB" id="117805at2"/>
<dbReference type="UniPathway" id="UPA00281"/>
<dbReference type="Proteomes" id="UP000000541">
    <property type="component" value="Chromosome"/>
</dbReference>
<dbReference type="Proteomes" id="UP000002670">
    <property type="component" value="Chromosome"/>
</dbReference>
<dbReference type="GO" id="GO:0005886">
    <property type="term" value="C:plasma membrane"/>
    <property type="evidence" value="ECO:0007669"/>
    <property type="project" value="UniProtKB-SubCell"/>
</dbReference>
<dbReference type="GO" id="GO:0016740">
    <property type="term" value="F:transferase activity"/>
    <property type="evidence" value="ECO:0007669"/>
    <property type="project" value="UniProtKB-KW"/>
</dbReference>
<dbReference type="GO" id="GO:0009103">
    <property type="term" value="P:lipopolysaccharide biosynthetic process"/>
    <property type="evidence" value="ECO:0007669"/>
    <property type="project" value="UniProtKB-UniPathway"/>
</dbReference>
<dbReference type="NCBIfam" id="TIGR04370">
    <property type="entry name" value="glyco_rpt_poly"/>
    <property type="match status" value="1"/>
</dbReference>
<evidence type="ECO:0000250" key="1">
    <source>
        <dbReference type="UniProtKB" id="Q58YW1"/>
    </source>
</evidence>
<evidence type="ECO:0000255" key="2"/>
<evidence type="ECO:0000305" key="3"/>
<protein>
    <recommendedName>
        <fullName evidence="3">O-antigen polymerase</fullName>
        <ecNumber evidence="1">2.4.99.27</ecNumber>
    </recommendedName>
</protein>
<reference key="1">
    <citation type="journal article" date="2001" name="Nature">
        <title>Complete genome sequence of a multiple drug resistant Salmonella enterica serovar Typhi CT18.</title>
        <authorList>
            <person name="Parkhill J."/>
            <person name="Dougan G."/>
            <person name="James K.D."/>
            <person name="Thomson N.R."/>
            <person name="Pickard D."/>
            <person name="Wain J."/>
            <person name="Churcher C.M."/>
            <person name="Mungall K.L."/>
            <person name="Bentley S.D."/>
            <person name="Holden M.T.G."/>
            <person name="Sebaihia M."/>
            <person name="Baker S."/>
            <person name="Basham D."/>
            <person name="Brooks K."/>
            <person name="Chillingworth T."/>
            <person name="Connerton P."/>
            <person name="Cronin A."/>
            <person name="Davis P."/>
            <person name="Davies R.M."/>
            <person name="Dowd L."/>
            <person name="White N."/>
            <person name="Farrar J."/>
            <person name="Feltwell T."/>
            <person name="Hamlin N."/>
            <person name="Haque A."/>
            <person name="Hien T.T."/>
            <person name="Holroyd S."/>
            <person name="Jagels K."/>
            <person name="Krogh A."/>
            <person name="Larsen T.S."/>
            <person name="Leather S."/>
            <person name="Moule S."/>
            <person name="O'Gaora P."/>
            <person name="Parry C."/>
            <person name="Quail M.A."/>
            <person name="Rutherford K.M."/>
            <person name="Simmonds M."/>
            <person name="Skelton J."/>
            <person name="Stevens K."/>
            <person name="Whitehead S."/>
            <person name="Barrell B.G."/>
        </authorList>
    </citation>
    <scope>NUCLEOTIDE SEQUENCE [LARGE SCALE GENOMIC DNA]</scope>
    <source>
        <strain>CT18</strain>
    </source>
</reference>
<reference key="2">
    <citation type="journal article" date="2003" name="J. Bacteriol.">
        <title>Comparative genomics of Salmonella enterica serovar Typhi strains Ty2 and CT18.</title>
        <authorList>
            <person name="Deng W."/>
            <person name="Liou S.-R."/>
            <person name="Plunkett G. III"/>
            <person name="Mayhew G.F."/>
            <person name="Rose D.J."/>
            <person name="Burland V."/>
            <person name="Kodoyianni V."/>
            <person name="Schwartz D.C."/>
            <person name="Blattner F.R."/>
        </authorList>
    </citation>
    <scope>NUCLEOTIDE SEQUENCE [LARGE SCALE GENOMIC DNA]</scope>
    <source>
        <strain>ATCC 700931 / Ty2</strain>
    </source>
</reference>
<gene>
    <name type="primary">rfc</name>
    <name type="ordered locus">STY1779</name>
    <name type="ordered locus">t1212</name>
</gene>
<accession>P0A236</accession>
<accession>P26479</accession>
<name>WZY_SALTI</name>